<reference key="1">
    <citation type="journal article" date="2006" name="BMC Genomics">
        <title>The genome of the square archaeon Haloquadratum walsbyi: life at the limits of water activity.</title>
        <authorList>
            <person name="Bolhuis H."/>
            <person name="Palm P."/>
            <person name="Wende A."/>
            <person name="Falb M."/>
            <person name="Rampp M."/>
            <person name="Rodriguez-Valera F."/>
            <person name="Pfeiffer F."/>
            <person name="Oesterhelt D."/>
        </authorList>
    </citation>
    <scope>NUCLEOTIDE SEQUENCE [LARGE SCALE GENOMIC DNA]</scope>
    <source>
        <strain>DSM 16790 / HBSQ001</strain>
    </source>
</reference>
<protein>
    <recommendedName>
        <fullName evidence="1">Protein translocase subunit SecE</fullName>
    </recommendedName>
    <alternativeName>
        <fullName evidence="1">Protein transport protein Sec61 gamma subunit homolog</fullName>
    </alternativeName>
</protein>
<proteinExistence type="inferred from homology"/>
<dbReference type="EMBL" id="AM180088">
    <property type="protein sequence ID" value="CAJ51371.1"/>
    <property type="molecule type" value="Genomic_DNA"/>
</dbReference>
<dbReference type="RefSeq" id="WP_011570532.1">
    <property type="nucleotide sequence ID" value="NC_008212.1"/>
</dbReference>
<dbReference type="SMR" id="Q18KS3"/>
<dbReference type="STRING" id="362976.HQ_1242A"/>
<dbReference type="GeneID" id="4194684"/>
<dbReference type="KEGG" id="hwa:HQ_1242A"/>
<dbReference type="eggNOG" id="arCOG02204">
    <property type="taxonomic scope" value="Archaea"/>
</dbReference>
<dbReference type="HOGENOM" id="CLU_191921_2_0_2"/>
<dbReference type="Proteomes" id="UP000001975">
    <property type="component" value="Chromosome"/>
</dbReference>
<dbReference type="GO" id="GO:0005886">
    <property type="term" value="C:plasma membrane"/>
    <property type="evidence" value="ECO:0007669"/>
    <property type="project" value="UniProtKB-SubCell"/>
</dbReference>
<dbReference type="GO" id="GO:0008320">
    <property type="term" value="F:protein transmembrane transporter activity"/>
    <property type="evidence" value="ECO:0007669"/>
    <property type="project" value="UniProtKB-UniRule"/>
</dbReference>
<dbReference type="GO" id="GO:0065002">
    <property type="term" value="P:intracellular protein transmembrane transport"/>
    <property type="evidence" value="ECO:0007669"/>
    <property type="project" value="UniProtKB-UniRule"/>
</dbReference>
<dbReference type="GO" id="GO:0009306">
    <property type="term" value="P:protein secretion"/>
    <property type="evidence" value="ECO:0007669"/>
    <property type="project" value="UniProtKB-UniRule"/>
</dbReference>
<dbReference type="GO" id="GO:0006605">
    <property type="term" value="P:protein targeting"/>
    <property type="evidence" value="ECO:0007669"/>
    <property type="project" value="UniProtKB-UniRule"/>
</dbReference>
<dbReference type="Gene3D" id="1.20.5.820">
    <property type="entry name" value="Preprotein translocase SecE subunit"/>
    <property type="match status" value="1"/>
</dbReference>
<dbReference type="HAMAP" id="MF_00422">
    <property type="entry name" value="SecE"/>
    <property type="match status" value="1"/>
</dbReference>
<dbReference type="InterPro" id="IPR023391">
    <property type="entry name" value="Prot_translocase_SecE_dom_sf"/>
</dbReference>
<dbReference type="InterPro" id="IPR008158">
    <property type="entry name" value="Translocase_Sec61-g"/>
</dbReference>
<dbReference type="InterPro" id="IPR001901">
    <property type="entry name" value="Translocase_SecE/Sec61-g"/>
</dbReference>
<dbReference type="NCBIfam" id="NF006910">
    <property type="entry name" value="PRK09400.1-6"/>
    <property type="match status" value="1"/>
</dbReference>
<dbReference type="NCBIfam" id="TIGR00327">
    <property type="entry name" value="secE_euk_arch"/>
    <property type="match status" value="1"/>
</dbReference>
<dbReference type="SUPFAM" id="SSF103456">
    <property type="entry name" value="Preprotein translocase SecE subunit"/>
    <property type="match status" value="1"/>
</dbReference>
<sequence length="57" mass="6088">MDVKIELSSYVRVLKLASTPSWNEFSQIGLIAGAGIVFVGFLGFLIFAIMTLLPGGV</sequence>
<keyword id="KW-1003">Cell membrane</keyword>
<keyword id="KW-0472">Membrane</keyword>
<keyword id="KW-0653">Protein transport</keyword>
<keyword id="KW-1185">Reference proteome</keyword>
<keyword id="KW-0811">Translocation</keyword>
<keyword id="KW-0812">Transmembrane</keyword>
<keyword id="KW-1133">Transmembrane helix</keyword>
<keyword id="KW-0813">Transport</keyword>
<organism>
    <name type="scientific">Haloquadratum walsbyi (strain DSM 16790 / HBSQ001)</name>
    <dbReference type="NCBI Taxonomy" id="362976"/>
    <lineage>
        <taxon>Archaea</taxon>
        <taxon>Methanobacteriati</taxon>
        <taxon>Methanobacteriota</taxon>
        <taxon>Stenosarchaea group</taxon>
        <taxon>Halobacteria</taxon>
        <taxon>Halobacteriales</taxon>
        <taxon>Haloferacaceae</taxon>
        <taxon>Haloquadratum</taxon>
    </lineage>
</organism>
<evidence type="ECO:0000255" key="1">
    <source>
        <dbReference type="HAMAP-Rule" id="MF_00422"/>
    </source>
</evidence>
<comment type="function">
    <text evidence="1">Essential subunit of the Sec protein translocation channel SecYEG. Clamps together the 2 halves of SecY. May contact the channel plug during translocation.</text>
</comment>
<comment type="subunit">
    <text evidence="1">Component of the Sec protein translocase complex. Heterotrimer consisting of SecY (alpha), SecG (beta) and SecE (gamma) subunits. The heterotrimers can form oligomers, although 1 heterotrimer is thought to be able to translocate proteins. Interacts with the ribosome. May interact with SecDF, and other proteins may be involved.</text>
</comment>
<comment type="subcellular location">
    <subcellularLocation>
        <location evidence="1">Cell membrane</location>
        <topology evidence="1">Single-pass membrane protein</topology>
    </subcellularLocation>
</comment>
<comment type="similarity">
    <text evidence="1">Belongs to the SecE/SEC61-gamma family.</text>
</comment>
<feature type="chain" id="PRO_0000273135" description="Protein translocase subunit SecE">
    <location>
        <begin position="1"/>
        <end position="57"/>
    </location>
</feature>
<feature type="transmembrane region" description="Helical" evidence="1">
    <location>
        <begin position="30"/>
        <end position="50"/>
    </location>
</feature>
<gene>
    <name evidence="1" type="primary">secE</name>
    <name type="ordered locus">HQ_1242A</name>
</gene>
<name>SECE_HALWD</name>
<accession>Q18KS3</accession>